<name>Y1502_MYCTU</name>
<sequence length="299" mass="33473">MAWRKLGRIFAPSGELDWSRSHAALPVPEWIEGDIFRIYFSGRDGQNRSSIGSVIVDLAVGGKILDIPAEPILRPGARGMFDDCGVSIGSIVRAGDTRLLYYTGWNLAVTVPWKNTIGVAISEAGAPFERWSTFPVVALDERDPFSLSYPWVIQDGGTYRMWYGSNLGWGEGTDEIPHVIRYAQSRDGVHWEKQDRVHIDTSGSDNSAACRPYVVRDAGVYRMWFCARGAKYRIYCATSEDGLTWRQLGKDEGIDVSPDSWDSDMIEYPCVFDHRGQRFMLYSGDGYGRTGFGLAVLEN</sequence>
<keyword id="KW-1185">Reference proteome</keyword>
<gene>
    <name type="ordered locus">Rv1502</name>
    <name type="ORF">MTCY277.24</name>
</gene>
<dbReference type="EMBL" id="AL123456">
    <property type="protein sequence ID" value="CCP44264.1"/>
    <property type="molecule type" value="Genomic_DNA"/>
</dbReference>
<dbReference type="PIR" id="A70713">
    <property type="entry name" value="A70713"/>
</dbReference>
<dbReference type="RefSeq" id="NP_216018.1">
    <property type="nucleotide sequence ID" value="NC_000962.3"/>
</dbReference>
<dbReference type="RefSeq" id="WP_003911545.1">
    <property type="nucleotide sequence ID" value="NZ_NVQJ01000004.1"/>
</dbReference>
<dbReference type="SMR" id="P9WLW7"/>
<dbReference type="STRING" id="83332.Rv1502"/>
<dbReference type="PaxDb" id="83332-Rv1502"/>
<dbReference type="DNASU" id="886486"/>
<dbReference type="GeneID" id="886486"/>
<dbReference type="KEGG" id="mtu:Rv1502"/>
<dbReference type="KEGG" id="mtv:RVBD_1502"/>
<dbReference type="TubercuList" id="Rv1502"/>
<dbReference type="eggNOG" id="COG1621">
    <property type="taxonomic scope" value="Bacteria"/>
</dbReference>
<dbReference type="InParanoid" id="P9WLW7"/>
<dbReference type="OrthoDB" id="9801455at2"/>
<dbReference type="Proteomes" id="UP000001584">
    <property type="component" value="Chromosome"/>
</dbReference>
<dbReference type="Gene3D" id="2.115.10.20">
    <property type="entry name" value="Glycosyl hydrolase domain, family 43"/>
    <property type="match status" value="2"/>
</dbReference>
<dbReference type="InterPro" id="IPR023296">
    <property type="entry name" value="Glyco_hydro_beta-prop_sf"/>
</dbReference>
<dbReference type="PANTHER" id="PTHR35279">
    <property type="match status" value="1"/>
</dbReference>
<dbReference type="PANTHER" id="PTHR35279:SF1">
    <property type="entry name" value="ARABINANASE_LEVANSUCRASE_INVERTASE"/>
    <property type="match status" value="1"/>
</dbReference>
<dbReference type="SUPFAM" id="SSF75005">
    <property type="entry name" value="Arabinanase/levansucrase/invertase"/>
    <property type="match status" value="2"/>
</dbReference>
<accession>P9WLW7</accession>
<accession>L0T9L7</accession>
<accession>P71783</accession>
<feature type="chain" id="PRO_0000103861" description="Uncharacterized protein Rv1502">
    <location>
        <begin position="1"/>
        <end position="299"/>
    </location>
</feature>
<organism>
    <name type="scientific">Mycobacterium tuberculosis (strain ATCC 25618 / H37Rv)</name>
    <dbReference type="NCBI Taxonomy" id="83332"/>
    <lineage>
        <taxon>Bacteria</taxon>
        <taxon>Bacillati</taxon>
        <taxon>Actinomycetota</taxon>
        <taxon>Actinomycetes</taxon>
        <taxon>Mycobacteriales</taxon>
        <taxon>Mycobacteriaceae</taxon>
        <taxon>Mycobacterium</taxon>
        <taxon>Mycobacterium tuberculosis complex</taxon>
    </lineage>
</organism>
<reference key="1">
    <citation type="journal article" date="1998" name="Nature">
        <title>Deciphering the biology of Mycobacterium tuberculosis from the complete genome sequence.</title>
        <authorList>
            <person name="Cole S.T."/>
            <person name="Brosch R."/>
            <person name="Parkhill J."/>
            <person name="Garnier T."/>
            <person name="Churcher C.M."/>
            <person name="Harris D.E."/>
            <person name="Gordon S.V."/>
            <person name="Eiglmeier K."/>
            <person name="Gas S."/>
            <person name="Barry C.E. III"/>
            <person name="Tekaia F."/>
            <person name="Badcock K."/>
            <person name="Basham D."/>
            <person name="Brown D."/>
            <person name="Chillingworth T."/>
            <person name="Connor R."/>
            <person name="Davies R.M."/>
            <person name="Devlin K."/>
            <person name="Feltwell T."/>
            <person name="Gentles S."/>
            <person name="Hamlin N."/>
            <person name="Holroyd S."/>
            <person name="Hornsby T."/>
            <person name="Jagels K."/>
            <person name="Krogh A."/>
            <person name="McLean J."/>
            <person name="Moule S."/>
            <person name="Murphy L.D."/>
            <person name="Oliver S."/>
            <person name="Osborne J."/>
            <person name="Quail M.A."/>
            <person name="Rajandream M.A."/>
            <person name="Rogers J."/>
            <person name="Rutter S."/>
            <person name="Seeger K."/>
            <person name="Skelton S."/>
            <person name="Squares S."/>
            <person name="Squares R."/>
            <person name="Sulston J.E."/>
            <person name="Taylor K."/>
            <person name="Whitehead S."/>
            <person name="Barrell B.G."/>
        </authorList>
    </citation>
    <scope>NUCLEOTIDE SEQUENCE [LARGE SCALE GENOMIC DNA]</scope>
    <source>
        <strain>ATCC 25618 / H37Rv</strain>
    </source>
</reference>
<reference key="2">
    <citation type="journal article" date="2011" name="Mol. Cell. Proteomics">
        <title>Proteogenomic analysis of Mycobacterium tuberculosis by high resolution mass spectrometry.</title>
        <authorList>
            <person name="Kelkar D.S."/>
            <person name="Kumar D."/>
            <person name="Kumar P."/>
            <person name="Balakrishnan L."/>
            <person name="Muthusamy B."/>
            <person name="Yadav A.K."/>
            <person name="Shrivastava P."/>
            <person name="Marimuthu A."/>
            <person name="Anand S."/>
            <person name="Sundaram H."/>
            <person name="Kingsbury R."/>
            <person name="Harsha H.C."/>
            <person name="Nair B."/>
            <person name="Prasad T.S."/>
            <person name="Chauhan D.S."/>
            <person name="Katoch K."/>
            <person name="Katoch V.M."/>
            <person name="Kumar P."/>
            <person name="Chaerkady R."/>
            <person name="Ramachandran S."/>
            <person name="Dash D."/>
            <person name="Pandey A."/>
        </authorList>
    </citation>
    <scope>IDENTIFICATION BY MASS SPECTROMETRY [LARGE SCALE ANALYSIS]</scope>
    <source>
        <strain>ATCC 25618 / H37Rv</strain>
    </source>
</reference>
<proteinExistence type="evidence at protein level"/>
<protein>
    <recommendedName>
        <fullName>Uncharacterized protein Rv1502</fullName>
    </recommendedName>
</protein>